<gene>
    <name evidence="1" type="primary">pdxB</name>
    <name type="ordered locus">SNSL254_A2558</name>
</gene>
<protein>
    <recommendedName>
        <fullName evidence="1">Erythronate-4-phosphate dehydrogenase</fullName>
        <ecNumber evidence="1">1.1.1.290</ecNumber>
    </recommendedName>
</protein>
<accession>B4SZP2</accession>
<sequence>MKILVDENMPYARELFSRLGEVKAVPGRPIPVEELNHADALMVRSVTKVNESLLSGTPINFVGTATAGTDHVDEAWLKQAGIGFSAAPGCNAIAVVEYVFSALLMLAERDGFSLRDRTIGIVGVGNVGSRLQTRLEALGIRTLLCDPPRAARGDEGDFRTLDELVQEADVLTFHTPLYKDGPYKTLHLADETLIRRLKPGAILINACRGPVVDNAALLARLNAGQPLSVVLDVWEGEPDLNVALLEAVDIGTSHIAGYTLEGKARGTTQVFEAYSAFIGREQRVALETLLPAPEFGRITLHGPLDQPTLKRLAHLVYDVRRDDAPLRKVAGIPGEFDKLRKNYLERREWSSLYVMCDDETAAALLCKLGFNAVHHPAH</sequence>
<feature type="chain" id="PRO_1000188279" description="Erythronate-4-phosphate dehydrogenase">
    <location>
        <begin position="1"/>
        <end position="378"/>
    </location>
</feature>
<feature type="active site" evidence="1">
    <location>
        <position position="208"/>
    </location>
</feature>
<feature type="active site" evidence="1">
    <location>
        <position position="237"/>
    </location>
</feature>
<feature type="active site" description="Proton donor" evidence="1">
    <location>
        <position position="254"/>
    </location>
</feature>
<feature type="binding site" evidence="1">
    <location>
        <position position="45"/>
    </location>
    <ligand>
        <name>substrate</name>
    </ligand>
</feature>
<feature type="binding site" evidence="1">
    <location>
        <position position="66"/>
    </location>
    <ligand>
        <name>substrate</name>
    </ligand>
</feature>
<feature type="binding site" evidence="1">
    <location>
        <position position="146"/>
    </location>
    <ligand>
        <name>NAD(+)</name>
        <dbReference type="ChEBI" id="CHEBI:57540"/>
    </ligand>
</feature>
<feature type="binding site" evidence="1">
    <location>
        <position position="175"/>
    </location>
    <ligand>
        <name>NAD(+)</name>
        <dbReference type="ChEBI" id="CHEBI:57540"/>
    </ligand>
</feature>
<feature type="binding site" evidence="1">
    <location>
        <position position="232"/>
    </location>
    <ligand>
        <name>NAD(+)</name>
        <dbReference type="ChEBI" id="CHEBI:57540"/>
    </ligand>
</feature>
<feature type="binding site" evidence="1">
    <location>
        <position position="257"/>
    </location>
    <ligand>
        <name>NAD(+)</name>
        <dbReference type="ChEBI" id="CHEBI:57540"/>
    </ligand>
</feature>
<feature type="binding site" evidence="1">
    <location>
        <position position="258"/>
    </location>
    <ligand>
        <name>substrate</name>
    </ligand>
</feature>
<name>PDXB_SALNS</name>
<dbReference type="EC" id="1.1.1.290" evidence="1"/>
<dbReference type="EMBL" id="CP001113">
    <property type="protein sequence ID" value="ACF63397.1"/>
    <property type="molecule type" value="Genomic_DNA"/>
</dbReference>
<dbReference type="RefSeq" id="WP_000699178.1">
    <property type="nucleotide sequence ID" value="NZ_CCMR01000001.1"/>
</dbReference>
<dbReference type="SMR" id="B4SZP2"/>
<dbReference type="KEGG" id="see:SNSL254_A2558"/>
<dbReference type="HOGENOM" id="CLU_019796_4_0_6"/>
<dbReference type="UniPathway" id="UPA00244">
    <property type="reaction ID" value="UER00310"/>
</dbReference>
<dbReference type="Proteomes" id="UP000008824">
    <property type="component" value="Chromosome"/>
</dbReference>
<dbReference type="GO" id="GO:0005829">
    <property type="term" value="C:cytosol"/>
    <property type="evidence" value="ECO:0007669"/>
    <property type="project" value="TreeGrafter"/>
</dbReference>
<dbReference type="GO" id="GO:0033711">
    <property type="term" value="F:4-phosphoerythronate dehydrogenase activity"/>
    <property type="evidence" value="ECO:0007669"/>
    <property type="project" value="UniProtKB-EC"/>
</dbReference>
<dbReference type="GO" id="GO:0051287">
    <property type="term" value="F:NAD binding"/>
    <property type="evidence" value="ECO:0007669"/>
    <property type="project" value="InterPro"/>
</dbReference>
<dbReference type="GO" id="GO:0046983">
    <property type="term" value="F:protein dimerization activity"/>
    <property type="evidence" value="ECO:0007669"/>
    <property type="project" value="InterPro"/>
</dbReference>
<dbReference type="GO" id="GO:0036001">
    <property type="term" value="P:'de novo' pyridoxal 5'-phosphate biosynthetic process"/>
    <property type="evidence" value="ECO:0007669"/>
    <property type="project" value="TreeGrafter"/>
</dbReference>
<dbReference type="GO" id="GO:0008615">
    <property type="term" value="P:pyridoxine biosynthetic process"/>
    <property type="evidence" value="ECO:0007669"/>
    <property type="project" value="UniProtKB-UniRule"/>
</dbReference>
<dbReference type="CDD" id="cd12158">
    <property type="entry name" value="ErythrP_dh"/>
    <property type="match status" value="1"/>
</dbReference>
<dbReference type="FunFam" id="3.30.1370.170:FF:000001">
    <property type="entry name" value="Erythronate-4-phosphate dehydrogenase"/>
    <property type="match status" value="1"/>
</dbReference>
<dbReference type="FunFam" id="3.40.50.720:FF:000093">
    <property type="entry name" value="Erythronate-4-phosphate dehydrogenase"/>
    <property type="match status" value="1"/>
</dbReference>
<dbReference type="Gene3D" id="3.30.1370.170">
    <property type="match status" value="1"/>
</dbReference>
<dbReference type="Gene3D" id="3.40.50.720">
    <property type="entry name" value="NAD(P)-binding Rossmann-like Domain"/>
    <property type="match status" value="2"/>
</dbReference>
<dbReference type="HAMAP" id="MF_01825">
    <property type="entry name" value="PdxB"/>
    <property type="match status" value="1"/>
</dbReference>
<dbReference type="InterPro" id="IPR006139">
    <property type="entry name" value="D-isomer_2_OHA_DH_cat_dom"/>
</dbReference>
<dbReference type="InterPro" id="IPR029753">
    <property type="entry name" value="D-isomer_DH_CS"/>
</dbReference>
<dbReference type="InterPro" id="IPR029752">
    <property type="entry name" value="D-isomer_DH_CS1"/>
</dbReference>
<dbReference type="InterPro" id="IPR006140">
    <property type="entry name" value="D-isomer_DH_NAD-bd"/>
</dbReference>
<dbReference type="InterPro" id="IPR020921">
    <property type="entry name" value="Erythronate-4-P_DHase"/>
</dbReference>
<dbReference type="InterPro" id="IPR024531">
    <property type="entry name" value="Erythronate-4-P_DHase_dimer"/>
</dbReference>
<dbReference type="InterPro" id="IPR036291">
    <property type="entry name" value="NAD(P)-bd_dom_sf"/>
</dbReference>
<dbReference type="InterPro" id="IPR038251">
    <property type="entry name" value="PdxB_dimer_sf"/>
</dbReference>
<dbReference type="NCBIfam" id="NF001309">
    <property type="entry name" value="PRK00257.1"/>
    <property type="match status" value="1"/>
</dbReference>
<dbReference type="NCBIfam" id="NF011966">
    <property type="entry name" value="PRK15438.1"/>
    <property type="match status" value="1"/>
</dbReference>
<dbReference type="PANTHER" id="PTHR42938">
    <property type="entry name" value="FORMATE DEHYDROGENASE 1"/>
    <property type="match status" value="1"/>
</dbReference>
<dbReference type="PANTHER" id="PTHR42938:SF9">
    <property type="entry name" value="FORMATE DEHYDROGENASE 1"/>
    <property type="match status" value="1"/>
</dbReference>
<dbReference type="Pfam" id="PF00389">
    <property type="entry name" value="2-Hacid_dh"/>
    <property type="match status" value="1"/>
</dbReference>
<dbReference type="Pfam" id="PF02826">
    <property type="entry name" value="2-Hacid_dh_C"/>
    <property type="match status" value="1"/>
</dbReference>
<dbReference type="Pfam" id="PF11890">
    <property type="entry name" value="DUF3410"/>
    <property type="match status" value="1"/>
</dbReference>
<dbReference type="SUPFAM" id="SSF52283">
    <property type="entry name" value="Formate/glycerate dehydrogenase catalytic domain-like"/>
    <property type="match status" value="1"/>
</dbReference>
<dbReference type="SUPFAM" id="SSF51735">
    <property type="entry name" value="NAD(P)-binding Rossmann-fold domains"/>
    <property type="match status" value="1"/>
</dbReference>
<dbReference type="PROSITE" id="PS00065">
    <property type="entry name" value="D_2_HYDROXYACID_DH_1"/>
    <property type="match status" value="1"/>
</dbReference>
<dbReference type="PROSITE" id="PS00671">
    <property type="entry name" value="D_2_HYDROXYACID_DH_3"/>
    <property type="match status" value="1"/>
</dbReference>
<reference key="1">
    <citation type="journal article" date="2011" name="J. Bacteriol.">
        <title>Comparative genomics of 28 Salmonella enterica isolates: evidence for CRISPR-mediated adaptive sublineage evolution.</title>
        <authorList>
            <person name="Fricke W.F."/>
            <person name="Mammel M.K."/>
            <person name="McDermott P.F."/>
            <person name="Tartera C."/>
            <person name="White D.G."/>
            <person name="Leclerc J.E."/>
            <person name="Ravel J."/>
            <person name="Cebula T.A."/>
        </authorList>
    </citation>
    <scope>NUCLEOTIDE SEQUENCE [LARGE SCALE GENOMIC DNA]</scope>
    <source>
        <strain>SL254</strain>
    </source>
</reference>
<proteinExistence type="inferred from homology"/>
<keyword id="KW-0963">Cytoplasm</keyword>
<keyword id="KW-0520">NAD</keyword>
<keyword id="KW-0560">Oxidoreductase</keyword>
<keyword id="KW-0664">Pyridoxine biosynthesis</keyword>
<comment type="function">
    <text evidence="1">Catalyzes the oxidation of erythronate-4-phosphate to 3-hydroxy-2-oxo-4-phosphonooxybutanoate.</text>
</comment>
<comment type="catalytic activity">
    <reaction evidence="1">
        <text>4-phospho-D-erythronate + NAD(+) = (R)-3-hydroxy-2-oxo-4-phosphooxybutanoate + NADH + H(+)</text>
        <dbReference type="Rhea" id="RHEA:18829"/>
        <dbReference type="ChEBI" id="CHEBI:15378"/>
        <dbReference type="ChEBI" id="CHEBI:57540"/>
        <dbReference type="ChEBI" id="CHEBI:57945"/>
        <dbReference type="ChEBI" id="CHEBI:58538"/>
        <dbReference type="ChEBI" id="CHEBI:58766"/>
        <dbReference type="EC" id="1.1.1.290"/>
    </reaction>
</comment>
<comment type="pathway">
    <text evidence="1">Cofactor biosynthesis; pyridoxine 5'-phosphate biosynthesis; pyridoxine 5'-phosphate from D-erythrose 4-phosphate: step 2/5.</text>
</comment>
<comment type="subunit">
    <text evidence="1">Homodimer.</text>
</comment>
<comment type="subcellular location">
    <subcellularLocation>
        <location evidence="1">Cytoplasm</location>
    </subcellularLocation>
</comment>
<comment type="similarity">
    <text evidence="1">Belongs to the D-isomer specific 2-hydroxyacid dehydrogenase family. PdxB subfamily.</text>
</comment>
<evidence type="ECO:0000255" key="1">
    <source>
        <dbReference type="HAMAP-Rule" id="MF_01825"/>
    </source>
</evidence>
<organism>
    <name type="scientific">Salmonella newport (strain SL254)</name>
    <dbReference type="NCBI Taxonomy" id="423368"/>
    <lineage>
        <taxon>Bacteria</taxon>
        <taxon>Pseudomonadati</taxon>
        <taxon>Pseudomonadota</taxon>
        <taxon>Gammaproteobacteria</taxon>
        <taxon>Enterobacterales</taxon>
        <taxon>Enterobacteriaceae</taxon>
        <taxon>Salmonella</taxon>
    </lineage>
</organism>